<feature type="chain" id="PRO_0000118292" description="NADH-ubiquinone oxidoreductase chain 6">
    <location>
        <begin position="1"/>
        <end position="174"/>
    </location>
</feature>
<feature type="transmembrane region" description="Helical" evidence="3">
    <location>
        <begin position="1"/>
        <end position="21"/>
    </location>
</feature>
<feature type="transmembrane region" description="Helical" evidence="3">
    <location>
        <begin position="24"/>
        <end position="44"/>
    </location>
</feature>
<feature type="transmembrane region" description="Helical" evidence="3">
    <location>
        <begin position="47"/>
        <end position="67"/>
    </location>
</feature>
<feature type="transmembrane region" description="Helical" evidence="3">
    <location>
        <begin position="86"/>
        <end position="106"/>
    </location>
</feature>
<feature type="transmembrane region" description="Helical" evidence="3">
    <location>
        <begin position="151"/>
        <end position="171"/>
    </location>
</feature>
<organism>
    <name type="scientific">Hylobates lar</name>
    <name type="common">Lar gibbon</name>
    <name type="synonym">White-handed gibbon</name>
    <dbReference type="NCBI Taxonomy" id="9580"/>
    <lineage>
        <taxon>Eukaryota</taxon>
        <taxon>Metazoa</taxon>
        <taxon>Chordata</taxon>
        <taxon>Craniata</taxon>
        <taxon>Vertebrata</taxon>
        <taxon>Euteleostomi</taxon>
        <taxon>Mammalia</taxon>
        <taxon>Eutheria</taxon>
        <taxon>Euarchontoglires</taxon>
        <taxon>Primates</taxon>
        <taxon>Haplorrhini</taxon>
        <taxon>Catarrhini</taxon>
        <taxon>Hylobatidae</taxon>
        <taxon>Hylobates</taxon>
    </lineage>
</organism>
<evidence type="ECO:0000250" key="1">
    <source>
        <dbReference type="UniProtKB" id="P03923"/>
    </source>
</evidence>
<evidence type="ECO:0000250" key="2">
    <source>
        <dbReference type="UniProtKB" id="P03924"/>
    </source>
</evidence>
<evidence type="ECO:0000255" key="3"/>
<evidence type="ECO:0000305" key="4"/>
<comment type="function">
    <text evidence="1">Core subunit of the mitochondrial membrane respiratory chain NADH dehydrogenase (Complex I) which catalyzes electron transfer from NADH through the respiratory chain, using ubiquinone as an electron acceptor. Essential for the catalytic activity and assembly of complex I.</text>
</comment>
<comment type="catalytic activity">
    <reaction evidence="1">
        <text>a ubiquinone + NADH + 5 H(+)(in) = a ubiquinol + NAD(+) + 4 H(+)(out)</text>
        <dbReference type="Rhea" id="RHEA:29091"/>
        <dbReference type="Rhea" id="RHEA-COMP:9565"/>
        <dbReference type="Rhea" id="RHEA-COMP:9566"/>
        <dbReference type="ChEBI" id="CHEBI:15378"/>
        <dbReference type="ChEBI" id="CHEBI:16389"/>
        <dbReference type="ChEBI" id="CHEBI:17976"/>
        <dbReference type="ChEBI" id="CHEBI:57540"/>
        <dbReference type="ChEBI" id="CHEBI:57945"/>
        <dbReference type="EC" id="7.1.1.2"/>
    </reaction>
</comment>
<comment type="subunit">
    <text evidence="2">Core subunit of respiratory chain NADH dehydrogenase (Complex I) which is composed of 45 different subunits.</text>
</comment>
<comment type="subcellular location">
    <subcellularLocation>
        <location evidence="2">Mitochondrion inner membrane</location>
        <topology evidence="3">Multi-pass membrane protein</topology>
    </subcellularLocation>
</comment>
<comment type="similarity">
    <text evidence="4">Belongs to the complex I subunit 6 family.</text>
</comment>
<dbReference type="EC" id="7.1.1.2" evidence="1"/>
<dbReference type="EMBL" id="X99256">
    <property type="protein sequence ID" value="CAA67639.1"/>
    <property type="molecule type" value="Genomic_DNA"/>
</dbReference>
<dbReference type="PIR" id="T11844">
    <property type="entry name" value="T11844"/>
</dbReference>
<dbReference type="RefSeq" id="NP_007833.1">
    <property type="nucleotide sequence ID" value="NC_002082.1"/>
</dbReference>
<dbReference type="SMR" id="Q95710"/>
<dbReference type="GeneID" id="808470"/>
<dbReference type="CTD" id="4541"/>
<dbReference type="GO" id="GO:0005743">
    <property type="term" value="C:mitochondrial inner membrane"/>
    <property type="evidence" value="ECO:0000250"/>
    <property type="project" value="UniProtKB"/>
</dbReference>
<dbReference type="GO" id="GO:0008137">
    <property type="term" value="F:NADH dehydrogenase (ubiquinone) activity"/>
    <property type="evidence" value="ECO:0000250"/>
    <property type="project" value="UniProtKB"/>
</dbReference>
<dbReference type="GO" id="GO:0006120">
    <property type="term" value="P:mitochondrial electron transport, NADH to ubiquinone"/>
    <property type="evidence" value="ECO:0000250"/>
    <property type="project" value="UniProtKB"/>
</dbReference>
<dbReference type="GO" id="GO:0032981">
    <property type="term" value="P:mitochondrial respiratory chain complex I assembly"/>
    <property type="evidence" value="ECO:0000250"/>
    <property type="project" value="UniProtKB"/>
</dbReference>
<dbReference type="Gene3D" id="1.20.120.1200">
    <property type="entry name" value="NADH-ubiquinone/plastoquinone oxidoreductase chain 6, subunit NuoJ"/>
    <property type="match status" value="1"/>
</dbReference>
<dbReference type="InterPro" id="IPR050269">
    <property type="entry name" value="ComplexI_Subunit6"/>
</dbReference>
<dbReference type="InterPro" id="IPR001457">
    <property type="entry name" value="NADH_UbQ/plastoQ_OxRdtase_su6"/>
</dbReference>
<dbReference type="InterPro" id="IPR042106">
    <property type="entry name" value="Nuo/plastoQ_OxRdtase_6_NuoJ"/>
</dbReference>
<dbReference type="PANTHER" id="PTHR11435">
    <property type="entry name" value="NADH UBIQUINONE OXIDOREDUCTASE SUBUNIT ND6"/>
    <property type="match status" value="1"/>
</dbReference>
<dbReference type="PANTHER" id="PTHR11435:SF1">
    <property type="entry name" value="NADH-UBIQUINONE OXIDOREDUCTASE CHAIN 6"/>
    <property type="match status" value="1"/>
</dbReference>
<dbReference type="Pfam" id="PF00499">
    <property type="entry name" value="Oxidored_q3"/>
    <property type="match status" value="1"/>
</dbReference>
<protein>
    <recommendedName>
        <fullName>NADH-ubiquinone oxidoreductase chain 6</fullName>
        <ecNumber evidence="1">7.1.1.2</ecNumber>
    </recommendedName>
    <alternativeName>
        <fullName>NADH dehydrogenase subunit 6</fullName>
    </alternativeName>
</protein>
<accession>Q95710</accession>
<name>NU6M_HYLLA</name>
<geneLocation type="mitochondrion"/>
<proteinExistence type="inferred from homology"/>
<reference key="1">
    <citation type="journal article" date="1996" name="Hereditas">
        <title>A complete mitochondrial DNA molecule of the white-handed gibbon, Hylobates lar, and comparison among individual mitochondrial genes of all hominoid genera.</title>
        <authorList>
            <person name="Arnason U."/>
            <person name="Gullberg A."/>
            <person name="Xu X."/>
        </authorList>
    </citation>
    <scope>NUCLEOTIDE SEQUENCE [GENOMIC DNA]</scope>
    <source>
        <strain>Isolate Ester</strain>
    </source>
</reference>
<keyword id="KW-0249">Electron transport</keyword>
<keyword id="KW-0472">Membrane</keyword>
<keyword id="KW-0496">Mitochondrion</keyword>
<keyword id="KW-0999">Mitochondrion inner membrane</keyword>
<keyword id="KW-0520">NAD</keyword>
<keyword id="KW-0679">Respiratory chain</keyword>
<keyword id="KW-1278">Translocase</keyword>
<keyword id="KW-0812">Transmembrane</keyword>
<keyword id="KW-1133">Transmembrane helix</keyword>
<keyword id="KW-0813">Transport</keyword>
<keyword id="KW-0830">Ubiquinone</keyword>
<sequence>MTYTLLLLSVILVVGFVGFSSKPSPIYGGLVLVVSGVVGCAVILNCGGGYLGLMVFLIYLGGMMVVFGYTTAMAIEEYPEAWGSGVEVLVGVLVGFVMEVALVLWAKEYDGLVMVLNFDNMGSWVIYEGEGSGLIREDSIGAGALYDYGRWLVVVTGWTLLVGVYIVIEIARGN</sequence>
<gene>
    <name type="primary">MT-ND6</name>
    <name type="synonym">MTND6</name>
    <name type="synonym">NADH6</name>
    <name type="synonym">ND6</name>
</gene>